<protein>
    <recommendedName>
        <fullName evidence="1">Glutamyl-tRNA reductase</fullName>
        <shortName evidence="1">GluTR</shortName>
        <ecNumber evidence="1">1.2.1.70</ecNumber>
    </recommendedName>
</protein>
<reference key="1">
    <citation type="journal article" date="2009" name="PLoS Genet.">
        <title>Organised genome dynamics in the Escherichia coli species results in highly diverse adaptive paths.</title>
        <authorList>
            <person name="Touchon M."/>
            <person name="Hoede C."/>
            <person name="Tenaillon O."/>
            <person name="Barbe V."/>
            <person name="Baeriswyl S."/>
            <person name="Bidet P."/>
            <person name="Bingen E."/>
            <person name="Bonacorsi S."/>
            <person name="Bouchier C."/>
            <person name="Bouvet O."/>
            <person name="Calteau A."/>
            <person name="Chiapello H."/>
            <person name="Clermont O."/>
            <person name="Cruveiller S."/>
            <person name="Danchin A."/>
            <person name="Diard M."/>
            <person name="Dossat C."/>
            <person name="Karoui M.E."/>
            <person name="Frapy E."/>
            <person name="Garry L."/>
            <person name="Ghigo J.M."/>
            <person name="Gilles A.M."/>
            <person name="Johnson J."/>
            <person name="Le Bouguenec C."/>
            <person name="Lescat M."/>
            <person name="Mangenot S."/>
            <person name="Martinez-Jehanne V."/>
            <person name="Matic I."/>
            <person name="Nassif X."/>
            <person name="Oztas S."/>
            <person name="Petit M.A."/>
            <person name="Pichon C."/>
            <person name="Rouy Z."/>
            <person name="Ruf C.S."/>
            <person name="Schneider D."/>
            <person name="Tourret J."/>
            <person name="Vacherie B."/>
            <person name="Vallenet D."/>
            <person name="Medigue C."/>
            <person name="Rocha E.P.C."/>
            <person name="Denamur E."/>
        </authorList>
    </citation>
    <scope>NUCLEOTIDE SEQUENCE [LARGE SCALE GENOMIC DNA]</scope>
    <source>
        <strain>IAI1</strain>
    </source>
</reference>
<comment type="function">
    <text evidence="1">Catalyzes the NADPH-dependent reduction of glutamyl-tRNA(Glu) to glutamate 1-semialdehyde (GSA).</text>
</comment>
<comment type="catalytic activity">
    <reaction evidence="1">
        <text>(S)-4-amino-5-oxopentanoate + tRNA(Glu) + NADP(+) = L-glutamyl-tRNA(Glu) + NADPH + H(+)</text>
        <dbReference type="Rhea" id="RHEA:12344"/>
        <dbReference type="Rhea" id="RHEA-COMP:9663"/>
        <dbReference type="Rhea" id="RHEA-COMP:9680"/>
        <dbReference type="ChEBI" id="CHEBI:15378"/>
        <dbReference type="ChEBI" id="CHEBI:57501"/>
        <dbReference type="ChEBI" id="CHEBI:57783"/>
        <dbReference type="ChEBI" id="CHEBI:58349"/>
        <dbReference type="ChEBI" id="CHEBI:78442"/>
        <dbReference type="ChEBI" id="CHEBI:78520"/>
        <dbReference type="EC" id="1.2.1.70"/>
    </reaction>
</comment>
<comment type="pathway">
    <text evidence="1">Porphyrin-containing compound metabolism; protoporphyrin-IX biosynthesis; 5-aminolevulinate from L-glutamyl-tRNA(Glu): step 1/2.</text>
</comment>
<comment type="subunit">
    <text evidence="1">Homodimer.</text>
</comment>
<comment type="domain">
    <text evidence="1">Possesses an unusual extended V-shaped dimeric structure with each monomer consisting of three distinct domains arranged along a curved 'spinal' alpha-helix. The N-terminal catalytic domain specifically recognizes the glutamate moiety of the substrate. The second domain is the NADPH-binding domain, and the third C-terminal domain is responsible for dimerization.</text>
</comment>
<comment type="miscellaneous">
    <text evidence="1">During catalysis, the active site Cys acts as a nucleophile attacking the alpha-carbonyl group of tRNA-bound glutamate with the formation of a thioester intermediate between enzyme and glutamate, and the concomitant release of tRNA(Glu). The thioester intermediate is finally reduced by direct hydride transfer from NADPH, to form the product GSA.</text>
</comment>
<comment type="similarity">
    <text evidence="1">Belongs to the glutamyl-tRNA reductase family.</text>
</comment>
<gene>
    <name evidence="1" type="primary">hemA</name>
    <name type="ordered locus">ECIAI1_1231</name>
</gene>
<dbReference type="EC" id="1.2.1.70" evidence="1"/>
<dbReference type="EMBL" id="CU928160">
    <property type="protein sequence ID" value="CAQ98090.1"/>
    <property type="molecule type" value="Genomic_DNA"/>
</dbReference>
<dbReference type="RefSeq" id="WP_000173200.1">
    <property type="nucleotide sequence ID" value="NC_011741.1"/>
</dbReference>
<dbReference type="SMR" id="B7LXC5"/>
<dbReference type="GeneID" id="93775275"/>
<dbReference type="KEGG" id="ecr:ECIAI1_1231"/>
<dbReference type="HOGENOM" id="CLU_035113_2_2_6"/>
<dbReference type="UniPathway" id="UPA00251">
    <property type="reaction ID" value="UER00316"/>
</dbReference>
<dbReference type="GO" id="GO:0008883">
    <property type="term" value="F:glutamyl-tRNA reductase activity"/>
    <property type="evidence" value="ECO:0007669"/>
    <property type="project" value="UniProtKB-UniRule"/>
</dbReference>
<dbReference type="GO" id="GO:0050661">
    <property type="term" value="F:NADP binding"/>
    <property type="evidence" value="ECO:0007669"/>
    <property type="project" value="InterPro"/>
</dbReference>
<dbReference type="GO" id="GO:0019353">
    <property type="term" value="P:protoporphyrinogen IX biosynthetic process from glutamate"/>
    <property type="evidence" value="ECO:0007669"/>
    <property type="project" value="TreeGrafter"/>
</dbReference>
<dbReference type="CDD" id="cd05213">
    <property type="entry name" value="NAD_bind_Glutamyl_tRNA_reduct"/>
    <property type="match status" value="1"/>
</dbReference>
<dbReference type="FunFam" id="3.30.460.30:FF:000001">
    <property type="entry name" value="Glutamyl-tRNA reductase"/>
    <property type="match status" value="1"/>
</dbReference>
<dbReference type="FunFam" id="3.40.50.720:FF:000031">
    <property type="entry name" value="Glutamyl-tRNA reductase"/>
    <property type="match status" value="1"/>
</dbReference>
<dbReference type="Gene3D" id="3.30.460.30">
    <property type="entry name" value="Glutamyl-tRNA reductase, N-terminal domain"/>
    <property type="match status" value="1"/>
</dbReference>
<dbReference type="Gene3D" id="3.40.50.720">
    <property type="entry name" value="NAD(P)-binding Rossmann-like Domain"/>
    <property type="match status" value="1"/>
</dbReference>
<dbReference type="HAMAP" id="MF_00087">
    <property type="entry name" value="Glu_tRNA_reductase"/>
    <property type="match status" value="1"/>
</dbReference>
<dbReference type="InterPro" id="IPR000343">
    <property type="entry name" value="4pyrrol_synth_GluRdtase"/>
</dbReference>
<dbReference type="InterPro" id="IPR015896">
    <property type="entry name" value="4pyrrol_synth_GluRdtase_dimer"/>
</dbReference>
<dbReference type="InterPro" id="IPR015895">
    <property type="entry name" value="4pyrrol_synth_GluRdtase_N"/>
</dbReference>
<dbReference type="InterPro" id="IPR018214">
    <property type="entry name" value="GluRdtase_CS"/>
</dbReference>
<dbReference type="InterPro" id="IPR036453">
    <property type="entry name" value="GluRdtase_dimer_dom_sf"/>
</dbReference>
<dbReference type="InterPro" id="IPR036343">
    <property type="entry name" value="GluRdtase_N_sf"/>
</dbReference>
<dbReference type="InterPro" id="IPR036291">
    <property type="entry name" value="NAD(P)-bd_dom_sf"/>
</dbReference>
<dbReference type="InterPro" id="IPR006151">
    <property type="entry name" value="Shikm_DH/Glu-tRNA_Rdtase"/>
</dbReference>
<dbReference type="NCBIfam" id="TIGR01035">
    <property type="entry name" value="hemA"/>
    <property type="match status" value="1"/>
</dbReference>
<dbReference type="PANTHER" id="PTHR43013">
    <property type="entry name" value="GLUTAMYL-TRNA REDUCTASE"/>
    <property type="match status" value="1"/>
</dbReference>
<dbReference type="PANTHER" id="PTHR43013:SF1">
    <property type="entry name" value="GLUTAMYL-TRNA REDUCTASE"/>
    <property type="match status" value="1"/>
</dbReference>
<dbReference type="Pfam" id="PF00745">
    <property type="entry name" value="GlutR_dimer"/>
    <property type="match status" value="1"/>
</dbReference>
<dbReference type="Pfam" id="PF05201">
    <property type="entry name" value="GlutR_N"/>
    <property type="match status" value="1"/>
</dbReference>
<dbReference type="Pfam" id="PF01488">
    <property type="entry name" value="Shikimate_DH"/>
    <property type="match status" value="1"/>
</dbReference>
<dbReference type="PIRSF" id="PIRSF000445">
    <property type="entry name" value="4pyrrol_synth_GluRdtase"/>
    <property type="match status" value="1"/>
</dbReference>
<dbReference type="SUPFAM" id="SSF69742">
    <property type="entry name" value="Glutamyl tRNA-reductase catalytic, N-terminal domain"/>
    <property type="match status" value="1"/>
</dbReference>
<dbReference type="SUPFAM" id="SSF69075">
    <property type="entry name" value="Glutamyl tRNA-reductase dimerization domain"/>
    <property type="match status" value="1"/>
</dbReference>
<dbReference type="SUPFAM" id="SSF51735">
    <property type="entry name" value="NAD(P)-binding Rossmann-fold domains"/>
    <property type="match status" value="1"/>
</dbReference>
<dbReference type="PROSITE" id="PS00747">
    <property type="entry name" value="GLUTR"/>
    <property type="match status" value="1"/>
</dbReference>
<sequence length="418" mass="46330">MTLLALGINHKTAPVSLRERVSFSPDKLDQALDSLLAQPMVQGGVVLSTCNRTELYLSVEEQDNLQEALIRWLCDYHNLNEEDLRKSLYWHQDNDAVSHLMRVASGLDSLVLGEPQILGQVKKAFADSQKGHMKASELERMFQKSFSVAKRVRTETDIGASAVSVAFAACTLARQIFESLSTVTVLLVGAGETIELVARHLREHKVQKMIIANRTRERAQILADEVGAEVIALSEIDERLREADIIISSTASPLPIIGKGMVERALKSRRNQPMLLVDIAVPRDVEPEVGKLANAYLYSVDDLQSIISHNLAQRKAAAVEAETIVAQETSEFMAWLRAQSASETIREYRSQAEHVRDELTAKALAALEQGGDAQAIMQDLAWKLTNRLIHAPTKSLQQAARDGDNERLNILRDSLGLE</sequence>
<proteinExistence type="inferred from homology"/>
<evidence type="ECO:0000255" key="1">
    <source>
        <dbReference type="HAMAP-Rule" id="MF_00087"/>
    </source>
</evidence>
<organism>
    <name type="scientific">Escherichia coli O8 (strain IAI1)</name>
    <dbReference type="NCBI Taxonomy" id="585034"/>
    <lineage>
        <taxon>Bacteria</taxon>
        <taxon>Pseudomonadati</taxon>
        <taxon>Pseudomonadota</taxon>
        <taxon>Gammaproteobacteria</taxon>
        <taxon>Enterobacterales</taxon>
        <taxon>Enterobacteriaceae</taxon>
        <taxon>Escherichia</taxon>
    </lineage>
</organism>
<name>HEM1_ECO8A</name>
<feature type="chain" id="PRO_1000190527" description="Glutamyl-tRNA reductase">
    <location>
        <begin position="1"/>
        <end position="418"/>
    </location>
</feature>
<feature type="active site" description="Nucleophile" evidence="1">
    <location>
        <position position="50"/>
    </location>
</feature>
<feature type="binding site" evidence="1">
    <location>
        <begin position="49"/>
        <end position="52"/>
    </location>
    <ligand>
        <name>substrate</name>
    </ligand>
</feature>
<feature type="binding site" evidence="1">
    <location>
        <position position="109"/>
    </location>
    <ligand>
        <name>substrate</name>
    </ligand>
</feature>
<feature type="binding site" evidence="1">
    <location>
        <begin position="114"/>
        <end position="116"/>
    </location>
    <ligand>
        <name>substrate</name>
    </ligand>
</feature>
<feature type="binding site" evidence="1">
    <location>
        <position position="120"/>
    </location>
    <ligand>
        <name>substrate</name>
    </ligand>
</feature>
<feature type="binding site" evidence="1">
    <location>
        <begin position="189"/>
        <end position="194"/>
    </location>
    <ligand>
        <name>NADP(+)</name>
        <dbReference type="ChEBI" id="CHEBI:58349"/>
    </ligand>
</feature>
<feature type="site" description="Important for activity" evidence="1">
    <location>
        <position position="99"/>
    </location>
</feature>
<keyword id="KW-0521">NADP</keyword>
<keyword id="KW-0560">Oxidoreductase</keyword>
<keyword id="KW-0627">Porphyrin biosynthesis</keyword>
<accession>B7LXC5</accession>